<protein>
    <recommendedName>
        <fullName evidence="1">Argininosuccinate synthase</fullName>
        <ecNumber evidence="1">6.3.4.5</ecNumber>
    </recommendedName>
    <alternativeName>
        <fullName evidence="1">Citrulline--aspartate ligase</fullName>
    </alternativeName>
</protein>
<comment type="catalytic activity">
    <reaction evidence="1">
        <text>L-citrulline + L-aspartate + ATP = 2-(N(omega)-L-arginino)succinate + AMP + diphosphate + H(+)</text>
        <dbReference type="Rhea" id="RHEA:10932"/>
        <dbReference type="ChEBI" id="CHEBI:15378"/>
        <dbReference type="ChEBI" id="CHEBI:29991"/>
        <dbReference type="ChEBI" id="CHEBI:30616"/>
        <dbReference type="ChEBI" id="CHEBI:33019"/>
        <dbReference type="ChEBI" id="CHEBI:57472"/>
        <dbReference type="ChEBI" id="CHEBI:57743"/>
        <dbReference type="ChEBI" id="CHEBI:456215"/>
        <dbReference type="EC" id="6.3.4.5"/>
    </reaction>
</comment>
<comment type="pathway">
    <text evidence="1">Amino-acid biosynthesis; L-arginine biosynthesis; L-arginine from L-ornithine and carbamoyl phosphate: step 2/3.</text>
</comment>
<comment type="subunit">
    <text evidence="1">Homotetramer.</text>
</comment>
<comment type="subcellular location">
    <subcellularLocation>
        <location evidence="1">Cytoplasm</location>
    </subcellularLocation>
</comment>
<comment type="similarity">
    <text evidence="1">Belongs to the argininosuccinate synthase family. Type 1 subfamily.</text>
</comment>
<name>ASSY_BART1</name>
<evidence type="ECO:0000255" key="1">
    <source>
        <dbReference type="HAMAP-Rule" id="MF_00005"/>
    </source>
</evidence>
<gene>
    <name evidence="1" type="primary">argG</name>
    <name type="ordered locus">BT_0022</name>
</gene>
<proteinExistence type="inferred from homology"/>
<dbReference type="EC" id="6.3.4.5" evidence="1"/>
<dbReference type="EMBL" id="AM260525">
    <property type="protein sequence ID" value="CAK00526.1"/>
    <property type="molecule type" value="Genomic_DNA"/>
</dbReference>
<dbReference type="RefSeq" id="WP_012230295.1">
    <property type="nucleotide sequence ID" value="NC_010161.1"/>
</dbReference>
<dbReference type="SMR" id="A9IL50"/>
<dbReference type="KEGG" id="btr:BT_0022"/>
<dbReference type="eggNOG" id="COG0137">
    <property type="taxonomic scope" value="Bacteria"/>
</dbReference>
<dbReference type="HOGENOM" id="CLU_032784_4_2_5"/>
<dbReference type="UniPathway" id="UPA00068">
    <property type="reaction ID" value="UER00113"/>
</dbReference>
<dbReference type="Proteomes" id="UP000001592">
    <property type="component" value="Chromosome"/>
</dbReference>
<dbReference type="GO" id="GO:0005737">
    <property type="term" value="C:cytoplasm"/>
    <property type="evidence" value="ECO:0007669"/>
    <property type="project" value="UniProtKB-SubCell"/>
</dbReference>
<dbReference type="GO" id="GO:0004055">
    <property type="term" value="F:argininosuccinate synthase activity"/>
    <property type="evidence" value="ECO:0007669"/>
    <property type="project" value="UniProtKB-UniRule"/>
</dbReference>
<dbReference type="GO" id="GO:0005524">
    <property type="term" value="F:ATP binding"/>
    <property type="evidence" value="ECO:0007669"/>
    <property type="project" value="UniProtKB-UniRule"/>
</dbReference>
<dbReference type="GO" id="GO:0000053">
    <property type="term" value="P:argininosuccinate metabolic process"/>
    <property type="evidence" value="ECO:0007669"/>
    <property type="project" value="TreeGrafter"/>
</dbReference>
<dbReference type="GO" id="GO:0006526">
    <property type="term" value="P:L-arginine biosynthetic process"/>
    <property type="evidence" value="ECO:0007669"/>
    <property type="project" value="UniProtKB-UniRule"/>
</dbReference>
<dbReference type="GO" id="GO:0000050">
    <property type="term" value="P:urea cycle"/>
    <property type="evidence" value="ECO:0007669"/>
    <property type="project" value="TreeGrafter"/>
</dbReference>
<dbReference type="CDD" id="cd01999">
    <property type="entry name" value="ASS"/>
    <property type="match status" value="1"/>
</dbReference>
<dbReference type="FunFam" id="3.40.50.620:FF:000019">
    <property type="entry name" value="Argininosuccinate synthase"/>
    <property type="match status" value="1"/>
</dbReference>
<dbReference type="FunFam" id="3.90.1260.10:FF:000007">
    <property type="entry name" value="Argininosuccinate synthase"/>
    <property type="match status" value="1"/>
</dbReference>
<dbReference type="Gene3D" id="3.90.1260.10">
    <property type="entry name" value="Argininosuccinate synthetase, chain A, domain 2"/>
    <property type="match status" value="1"/>
</dbReference>
<dbReference type="Gene3D" id="3.40.50.620">
    <property type="entry name" value="HUPs"/>
    <property type="match status" value="1"/>
</dbReference>
<dbReference type="Gene3D" id="1.20.5.470">
    <property type="entry name" value="Single helix bin"/>
    <property type="match status" value="1"/>
</dbReference>
<dbReference type="HAMAP" id="MF_00005">
    <property type="entry name" value="Arg_succ_synth_type1"/>
    <property type="match status" value="1"/>
</dbReference>
<dbReference type="InterPro" id="IPR048268">
    <property type="entry name" value="Arginosuc_syn_C"/>
</dbReference>
<dbReference type="InterPro" id="IPR048267">
    <property type="entry name" value="Arginosuc_syn_N"/>
</dbReference>
<dbReference type="InterPro" id="IPR001518">
    <property type="entry name" value="Arginosuc_synth"/>
</dbReference>
<dbReference type="InterPro" id="IPR018223">
    <property type="entry name" value="Arginosuc_synth_CS"/>
</dbReference>
<dbReference type="InterPro" id="IPR023434">
    <property type="entry name" value="Arginosuc_synth_type_1_subfam"/>
</dbReference>
<dbReference type="InterPro" id="IPR024074">
    <property type="entry name" value="AS_cat/multimer_dom_body"/>
</dbReference>
<dbReference type="InterPro" id="IPR014729">
    <property type="entry name" value="Rossmann-like_a/b/a_fold"/>
</dbReference>
<dbReference type="NCBIfam" id="TIGR00032">
    <property type="entry name" value="argG"/>
    <property type="match status" value="1"/>
</dbReference>
<dbReference type="NCBIfam" id="NF001770">
    <property type="entry name" value="PRK00509.1"/>
    <property type="match status" value="1"/>
</dbReference>
<dbReference type="PANTHER" id="PTHR11587">
    <property type="entry name" value="ARGININOSUCCINATE SYNTHASE"/>
    <property type="match status" value="1"/>
</dbReference>
<dbReference type="PANTHER" id="PTHR11587:SF2">
    <property type="entry name" value="ARGININOSUCCINATE SYNTHASE"/>
    <property type="match status" value="1"/>
</dbReference>
<dbReference type="Pfam" id="PF20979">
    <property type="entry name" value="Arginosuc_syn_C"/>
    <property type="match status" value="1"/>
</dbReference>
<dbReference type="Pfam" id="PF00764">
    <property type="entry name" value="Arginosuc_synth"/>
    <property type="match status" value="1"/>
</dbReference>
<dbReference type="SUPFAM" id="SSF52402">
    <property type="entry name" value="Adenine nucleotide alpha hydrolases-like"/>
    <property type="match status" value="1"/>
</dbReference>
<dbReference type="SUPFAM" id="SSF69864">
    <property type="entry name" value="Argininosuccinate synthetase, C-terminal domain"/>
    <property type="match status" value="1"/>
</dbReference>
<dbReference type="PROSITE" id="PS00564">
    <property type="entry name" value="ARGININOSUCCIN_SYN_1"/>
    <property type="match status" value="1"/>
</dbReference>
<dbReference type="PROSITE" id="PS00565">
    <property type="entry name" value="ARGININOSUCCIN_SYN_2"/>
    <property type="match status" value="1"/>
</dbReference>
<organism>
    <name type="scientific">Bartonella tribocorum (strain CIP 105476 / IBS 506)</name>
    <dbReference type="NCBI Taxonomy" id="382640"/>
    <lineage>
        <taxon>Bacteria</taxon>
        <taxon>Pseudomonadati</taxon>
        <taxon>Pseudomonadota</taxon>
        <taxon>Alphaproteobacteria</taxon>
        <taxon>Hyphomicrobiales</taxon>
        <taxon>Bartonellaceae</taxon>
        <taxon>Bartonella</taxon>
    </lineage>
</organism>
<reference key="1">
    <citation type="journal article" date="2007" name="Nat. Genet.">
        <title>Genomic analysis of Bartonella identifies type IV secretion systems as host adaptability factors.</title>
        <authorList>
            <person name="Saenz H.L."/>
            <person name="Engel P."/>
            <person name="Stoeckli M.C."/>
            <person name="Lanz C."/>
            <person name="Raddatz G."/>
            <person name="Vayssier-Taussat M."/>
            <person name="Birtles R."/>
            <person name="Schuster S.C."/>
            <person name="Dehio C."/>
        </authorList>
    </citation>
    <scope>NUCLEOTIDE SEQUENCE [LARGE SCALE GENOMIC DNA]</scope>
    <source>
        <strain>CIP 105476 / IBS 506</strain>
    </source>
</reference>
<feature type="chain" id="PRO_1000073812" description="Argininosuccinate synthase">
    <location>
        <begin position="1"/>
        <end position="411"/>
    </location>
</feature>
<feature type="binding site" evidence="1">
    <location>
        <begin position="13"/>
        <end position="21"/>
    </location>
    <ligand>
        <name>ATP</name>
        <dbReference type="ChEBI" id="CHEBI:30616"/>
    </ligand>
</feature>
<feature type="binding site" evidence="1">
    <location>
        <position position="40"/>
    </location>
    <ligand>
        <name>ATP</name>
        <dbReference type="ChEBI" id="CHEBI:30616"/>
    </ligand>
</feature>
<feature type="binding site" evidence="1">
    <location>
        <position position="91"/>
    </location>
    <ligand>
        <name>L-citrulline</name>
        <dbReference type="ChEBI" id="CHEBI:57743"/>
    </ligand>
</feature>
<feature type="binding site" evidence="1">
    <location>
        <position position="96"/>
    </location>
    <ligand>
        <name>L-citrulline</name>
        <dbReference type="ChEBI" id="CHEBI:57743"/>
    </ligand>
</feature>
<feature type="binding site" evidence="1">
    <location>
        <position position="121"/>
    </location>
    <ligand>
        <name>ATP</name>
        <dbReference type="ChEBI" id="CHEBI:30616"/>
    </ligand>
</feature>
<feature type="binding site" evidence="1">
    <location>
        <position position="123"/>
    </location>
    <ligand>
        <name>L-aspartate</name>
        <dbReference type="ChEBI" id="CHEBI:29991"/>
    </ligand>
</feature>
<feature type="binding site" evidence="1">
    <location>
        <position position="127"/>
    </location>
    <ligand>
        <name>L-aspartate</name>
        <dbReference type="ChEBI" id="CHEBI:29991"/>
    </ligand>
</feature>
<feature type="binding site" evidence="1">
    <location>
        <position position="127"/>
    </location>
    <ligand>
        <name>L-citrulline</name>
        <dbReference type="ChEBI" id="CHEBI:57743"/>
    </ligand>
</feature>
<feature type="binding site" evidence="1">
    <location>
        <position position="128"/>
    </location>
    <ligand>
        <name>L-aspartate</name>
        <dbReference type="ChEBI" id="CHEBI:29991"/>
    </ligand>
</feature>
<feature type="binding site" evidence="1">
    <location>
        <position position="131"/>
    </location>
    <ligand>
        <name>L-citrulline</name>
        <dbReference type="ChEBI" id="CHEBI:57743"/>
    </ligand>
</feature>
<feature type="binding site" evidence="1">
    <location>
        <position position="182"/>
    </location>
    <ligand>
        <name>L-citrulline</name>
        <dbReference type="ChEBI" id="CHEBI:57743"/>
    </ligand>
</feature>
<feature type="binding site" evidence="1">
    <location>
        <position position="191"/>
    </location>
    <ligand>
        <name>L-citrulline</name>
        <dbReference type="ChEBI" id="CHEBI:57743"/>
    </ligand>
</feature>
<feature type="binding site" evidence="1">
    <location>
        <position position="267"/>
    </location>
    <ligand>
        <name>L-citrulline</name>
        <dbReference type="ChEBI" id="CHEBI:57743"/>
    </ligand>
</feature>
<feature type="binding site" evidence="1">
    <location>
        <position position="279"/>
    </location>
    <ligand>
        <name>L-citrulline</name>
        <dbReference type="ChEBI" id="CHEBI:57743"/>
    </ligand>
</feature>
<accession>A9IL50</accession>
<sequence length="411" mass="46247">MKKWQNIRKVVLAYSGGLDTSIILKWLQSTLDAEVVTFTADLGQGEELELARRKAEMLGVKEIYIEDLREEFVRDFVFPMFRANTVYEGAYLLGTSIARPLISKRLIEIAKETGADAIAHGATGKGNDQVRFELSAYALNPDIKIIAPWRDWDFKSRTDLFEFARMHQIPVEKDQQGEAPFSVDANLLHSSSEGKILENPALPAPEYVHIRTLSPEDAPDQATRITLGFKKGDAVSINGKNLSPATLLAELNRYGRDNGIGRLDLVENRFVGMKSRGFYETPGGTILLAAHRAIESLTLDRGAAHLKDELMPRYAELIYYGFWFSPERKMLQAAIDLSQEHVEGEVTLKLYKGNVIVEGRQSKKSLYSSELVTFEDDQGAYDQRDATGFIKLNALRLRTLARRCQGNQEKK</sequence>
<keyword id="KW-0028">Amino-acid biosynthesis</keyword>
<keyword id="KW-0055">Arginine biosynthesis</keyword>
<keyword id="KW-0067">ATP-binding</keyword>
<keyword id="KW-0963">Cytoplasm</keyword>
<keyword id="KW-0436">Ligase</keyword>
<keyword id="KW-0547">Nucleotide-binding</keyword>